<accession>B0S5N4</accession>
<accession>A5JJU2</accession>
<accession>A8IYK6</accession>
<accession>B3DKK4</accession>
<sequence>MRSLWLLVFSFSVLTGTNMAFPMILSERPEVTGSFKVKDTSLTHLTVHRKTGEVFVGAINRVYKLSANLTETRSHQTGPVEDNAKCYPPPSVRACTQKLESTDNVNKLLLVDYAGNRLVACGSIWQGVCQFLRLEDLFKLGEPHHRKEHYLSGAKESDGMAGVVVGDDDGDLKKKKKGGSRLFIGAAIDGKSEYFPTLSSRKLVADEESVNMFSLVYQDEFVSSQIKIPSDTLSQYPAFDIYYVYGFSSRTYIYFLTLQLDTQLTQVDVTGEKFFTSKIVRMCSNDTEFYSYVEFPLGCTKDGVEYRLVQAAYKHRPGKILAQALGLSEDEDVLFVIFSQGQKNRANPPRETVLCLFTLHQINLAMRERIKSCYRGEGKLSLPWLLNKELPCINTPKQIGDDFCGLVLNQPLGGLMVIEGIPLFDDRTDGMASVAAYTYGDHSVVFVGTRSGHLKKIRVNGVPPPSENALLYETVTVVEGSPILRDMVFSPDYQYIYLLSDKQVSRLPVESCSQYSSCKTCLGSGDPHCGWCVLHNKCSRKEACEKWAEPLHFSTELKQCVDITVTPDNMSVTSVSTQLSVKVANVPNLSAGVTCVFEELTESPGEVLAEGQILCMSPSLRDVPSVTQGYGDKRVVKLSLKSKETGLKFITTDFVFYNCSVLQSCSSCVSSPFPCNWCKYRHICTNNVAECSFQEGRVSSAEGCPQILPSSDILVPAGIVRPITLRARNLPQPQSGQKNYECVFNIQGKVQRIPAVRFNSSCIQCQNTSYWYEGNEMGDLPVDFSIVWDGDFPIDKPSSMRALLYKCEAQRDSCGLCLKADSTFECGWCLADKKCLLKQHCPSAEHNWMHQGRRNIRCSHPRITKIRPLTGPKEGGTRVTIEGENLGLQVREITHVRVAGVRCNPAAAEYISAERIVCDMEESLMSSPPGGPVELCIGDCSAEYRTQSTQTYSFVMPSFSRVRPEKGPVSGGTRLTISGRHLDAGSAVTVFLAQEECLFVRRTVREIVCVTPPSASGSGPSSVKLFIDKAEITSDTRYIYTEDPNISTIEPNWSIINGSTSLTVTGTNLLTIQEPKVRAKYGGVETTNICSLVNDSVMTCLAPGIIYTKREAPESGVHPDEFGFILDHVSALLILNGTPFTYYPNPTFEPLGNAGILEVKPGSPIILKGKNLIPPAPGNIRLNYSVTIGETPCLLTVSESQLLCDSPDLTGEQRVMILVGGLEYSPGMLHIYSDSTLTLPAIIGIGAGGGVLLIAIIAVLIAYKRKTRDADRTLKRLQLQMDNLESRVALECKEAFAELQTDIQELTNDMDGVKIPFLEYRTYTMRVMFPGIEEHPVLKELDSPANVEKALRLFSQLLHNKMFLLTFIHTLEAQRSFSMRDRGNVASLLMAALQGRMEYATVVLKQLLADLIEKNLENRNHPKLLLRRTESVAEKMLTNWFTFLLHRFLKECAGEPLFMLYCAIKQQMEKGPIDAITGEARYSLSEDKLIRQQIDYKQLTLMCIPPEGEAGTEIPVKVLNCDTITQVKDKLLDAVYKGIPYSQRPQADDMDLEWRQGRLTRIILQDEDVTTKIESDWKRLNTLAHYQVTDGSLVALVQKQVSAYNIANSFTFTRSLSRYESLLRTSSSPDSLRSRAPMITPDQETGTKLWHLVKNHEHADQREGDRGSKMVSEIYLTRLLATKGTLQKFVDDLFETVFSTAHRGSALPLAIKYMFDFLDEQADKRQITDPDVRHTWKSNCLPLRFWVNVIKNPQFVFDIHKNSITDACLSVVAQTFMDSCSTSEHRLGKDSPSNKLLYAKDIPNYKSWVERYYRDISKMPSISDQDMDAYLVEQSRLHGNEFNTLSALSELYFYINKYKEEILTALDRDGYCRKHKLRHKLEQAINLMSGSS</sequence>
<keyword id="KW-1003">Cell membrane</keyword>
<keyword id="KW-0175">Coiled coil</keyword>
<keyword id="KW-1015">Disulfide bond</keyword>
<keyword id="KW-0325">Glycoprotein</keyword>
<keyword id="KW-0472">Membrane</keyword>
<keyword id="KW-0675">Receptor</keyword>
<keyword id="KW-1185">Reference proteome</keyword>
<keyword id="KW-0677">Repeat</keyword>
<keyword id="KW-0732">Signal</keyword>
<keyword id="KW-0812">Transmembrane</keyword>
<keyword id="KW-1133">Transmembrane helix</keyword>
<evidence type="ECO:0000255" key="1"/>
<evidence type="ECO:0000255" key="2">
    <source>
        <dbReference type="PROSITE-ProRule" id="PRU00352"/>
    </source>
</evidence>
<evidence type="ECO:0000269" key="3">
    <source>
    </source>
</evidence>
<evidence type="ECO:0000269" key="4">
    <source>
    </source>
</evidence>
<evidence type="ECO:0000305" key="5"/>
<organism>
    <name type="scientific">Danio rerio</name>
    <name type="common">Zebrafish</name>
    <name type="synonym">Brachydanio rerio</name>
    <dbReference type="NCBI Taxonomy" id="7955"/>
    <lineage>
        <taxon>Eukaryota</taxon>
        <taxon>Metazoa</taxon>
        <taxon>Chordata</taxon>
        <taxon>Craniata</taxon>
        <taxon>Vertebrata</taxon>
        <taxon>Euteleostomi</taxon>
        <taxon>Actinopterygii</taxon>
        <taxon>Neopterygii</taxon>
        <taxon>Teleostei</taxon>
        <taxon>Ostariophysi</taxon>
        <taxon>Cypriniformes</taxon>
        <taxon>Danionidae</taxon>
        <taxon>Danioninae</taxon>
        <taxon>Danio</taxon>
    </lineage>
</organism>
<comment type="function">
    <text evidence="3 4">Coreceptor for class 3 semaphorins. Necessary for signaling by class 3 semaphorins and subsequent remodeling of the cytoskeleton. Plays a role in axon guidance in the developing nervous system. Class 3 semaphorins bind to a complex composed of a neuropilin and a plexin. The plexin modulates the affinity of the complex for specific semaphorins, and its cytoplasmic domain is required for the activation of down-stream signaling events in the cytoplasm.</text>
</comment>
<comment type="subcellular location">
    <subcellularLocation>
        <location evidence="5">Cell membrane</location>
        <topology evidence="5">Single-pass type I membrane protein</topology>
    </subcellularLocation>
</comment>
<comment type="tissue specificity">
    <text evidence="3">Detected in primary motor neurons in the embryonic nervous system.</text>
</comment>
<comment type="similarity">
    <text evidence="5">Belongs to the plexin family.</text>
</comment>
<name>PLXA3_DANRE</name>
<gene>
    <name type="primary">plxna3</name>
    <name type="ORF">si:dkey-7i23.3</name>
</gene>
<feature type="signal peptide" evidence="1">
    <location>
        <begin position="1"/>
        <end position="20"/>
    </location>
</feature>
<feature type="chain" id="PRO_0000411106" description="Plexin A3">
    <location>
        <begin position="21"/>
        <end position="1892"/>
    </location>
</feature>
<feature type="topological domain" description="Extracellular" evidence="1">
    <location>
        <begin position="21"/>
        <end position="1240"/>
    </location>
</feature>
<feature type="transmembrane region" description="Helical" evidence="1">
    <location>
        <begin position="1241"/>
        <end position="1261"/>
    </location>
</feature>
<feature type="topological domain" description="Cytoplasmic" evidence="1">
    <location>
        <begin position="1262"/>
        <end position="1892"/>
    </location>
</feature>
<feature type="domain" description="Sema" evidence="2">
    <location>
        <begin position="21"/>
        <end position="509"/>
    </location>
</feature>
<feature type="domain" description="IPT/TIG 1">
    <location>
        <begin position="861"/>
        <end position="955"/>
    </location>
</feature>
<feature type="domain" description="IPT/TIG 2">
    <location>
        <begin position="957"/>
        <end position="1041"/>
    </location>
</feature>
<feature type="domain" description="IPT/TIG 3">
    <location>
        <begin position="1044"/>
        <end position="1143"/>
    </location>
</feature>
<feature type="domain" description="IPT/TIG 4">
    <location>
        <begin position="1146"/>
        <end position="1232"/>
    </location>
</feature>
<feature type="coiled-coil region" evidence="1">
    <location>
        <begin position="1262"/>
        <end position="1315"/>
    </location>
</feature>
<feature type="glycosylation site" description="N-linked (GlcNAc...) asparagine" evidence="1">
    <location>
        <position position="68"/>
    </location>
</feature>
<feature type="glycosylation site" description="N-linked (GlcNAc...) asparagine" evidence="1">
    <location>
        <position position="569"/>
    </location>
</feature>
<feature type="glycosylation site" description="N-linked (GlcNAc...) asparagine" evidence="1">
    <location>
        <position position="1183"/>
    </location>
</feature>
<feature type="disulfide bond" evidence="2">
    <location>
        <begin position="86"/>
        <end position="95"/>
    </location>
</feature>
<feature type="disulfide bond" evidence="2">
    <location>
        <begin position="121"/>
        <end position="129"/>
    </location>
</feature>
<feature type="disulfide bond" evidence="2">
    <location>
        <begin position="283"/>
        <end position="404"/>
    </location>
</feature>
<feature type="disulfide bond" evidence="2">
    <location>
        <begin position="299"/>
        <end position="355"/>
    </location>
</feature>
<feature type="disulfide bond" evidence="2">
    <location>
        <begin position="373"/>
        <end position="392"/>
    </location>
</feature>
<feature type="disulfide bond" evidence="2">
    <location>
        <begin position="512"/>
        <end position="529"/>
    </location>
</feature>
<feature type="disulfide bond" evidence="2">
    <location>
        <begin position="518"/>
        <end position="560"/>
    </location>
</feature>
<feature type="disulfide bond" evidence="2">
    <location>
        <begin position="521"/>
        <end position="538"/>
    </location>
</feature>
<feature type="disulfide bond" evidence="2">
    <location>
        <begin position="532"/>
        <end position="544"/>
    </location>
</feature>
<feature type="disulfide bond" evidence="2">
    <location>
        <begin position="595"/>
        <end position="615"/>
    </location>
</feature>
<feature type="sequence conflict" description="In Ref. 2; BAF81998." evidence="5" ref="2">
    <original>V</original>
    <variation>I</variation>
    <location>
        <position position="62"/>
    </location>
</feature>
<feature type="sequence conflict" description="In Ref. 1; ABQ45399." evidence="5" ref="1">
    <original>V</original>
    <variation>A</variation>
    <location>
        <position position="119"/>
    </location>
</feature>
<feature type="sequence conflict" description="In Ref. 2; BAF81998." evidence="5" ref="2">
    <original>D</original>
    <variation>E</variation>
    <location>
        <position position="169"/>
    </location>
</feature>
<feature type="sequence conflict" description="In Ref. 2; BAF81998 and 4; AAI63880." evidence="5" ref="2 4">
    <original>E</original>
    <variation>K</variation>
    <location>
        <position position="610"/>
    </location>
</feature>
<feature type="sequence conflict" description="In Ref. 1; ABQ45399 and 3; CAQ14174/CAQ15628." evidence="5" ref="1 3">
    <original>P</original>
    <variation>S</variation>
    <location>
        <position position="672"/>
    </location>
</feature>
<feature type="sequence conflict" description="In Ref. 4; AAI63880." evidence="5" ref="4">
    <original>A</original>
    <variation>V</variation>
    <location>
        <position position="1176"/>
    </location>
</feature>
<proteinExistence type="evidence at transcript level"/>
<protein>
    <recommendedName>
        <fullName>Plexin A3</fullName>
    </recommendedName>
</protein>
<dbReference type="EMBL" id="EF538743">
    <property type="protein sequence ID" value="ABQ45399.1"/>
    <property type="molecule type" value="mRNA"/>
</dbReference>
<dbReference type="EMBL" id="AB262187">
    <property type="protein sequence ID" value="BAF81998.1"/>
    <property type="molecule type" value="mRNA"/>
</dbReference>
<dbReference type="EMBL" id="BX284684">
    <property type="protein sequence ID" value="CAQ14174.1"/>
    <property type="molecule type" value="Genomic_DNA"/>
</dbReference>
<dbReference type="EMBL" id="BX284664">
    <property type="protein sequence ID" value="CAQ14174.1"/>
    <property type="status" value="JOINED"/>
    <property type="molecule type" value="Genomic_DNA"/>
</dbReference>
<dbReference type="EMBL" id="CR847854">
    <property type="protein sequence ID" value="CAQ14174.1"/>
    <property type="status" value="JOINED"/>
    <property type="molecule type" value="Genomic_DNA"/>
</dbReference>
<dbReference type="EMBL" id="BX284664">
    <property type="protein sequence ID" value="CAQ15628.1"/>
    <property type="molecule type" value="Genomic_DNA"/>
</dbReference>
<dbReference type="EMBL" id="BX284684">
    <property type="protein sequence ID" value="CAQ15628.1"/>
    <property type="status" value="JOINED"/>
    <property type="molecule type" value="Genomic_DNA"/>
</dbReference>
<dbReference type="EMBL" id="CR847854">
    <property type="protein sequence ID" value="CAQ15628.1"/>
    <property type="status" value="JOINED"/>
    <property type="molecule type" value="Genomic_DNA"/>
</dbReference>
<dbReference type="EMBL" id="BC163880">
    <property type="protein sequence ID" value="AAI63880.1"/>
    <property type="molecule type" value="mRNA"/>
</dbReference>
<dbReference type="RefSeq" id="NP_001091959.1">
    <property type="nucleotide sequence ID" value="NM_001098489.1"/>
</dbReference>
<dbReference type="SMR" id="B0S5N4"/>
<dbReference type="FunCoup" id="B0S5N4">
    <property type="interactions" value="881"/>
</dbReference>
<dbReference type="STRING" id="7955.ENSDARP00000043999"/>
<dbReference type="GlyCosmos" id="B0S5N4">
    <property type="glycosylation" value="3 sites, No reported glycans"/>
</dbReference>
<dbReference type="PaxDb" id="7955-ENSDARP00000074151"/>
<dbReference type="PeptideAtlas" id="B0S5N4"/>
<dbReference type="GeneID" id="567422"/>
<dbReference type="KEGG" id="dre:567422"/>
<dbReference type="AGR" id="ZFIN:ZDB-GENE-070613-1"/>
<dbReference type="CTD" id="55558"/>
<dbReference type="ZFIN" id="ZDB-GENE-070613-1">
    <property type="gene designation" value="plxna3"/>
</dbReference>
<dbReference type="eggNOG" id="KOG3610">
    <property type="taxonomic scope" value="Eukaryota"/>
</dbReference>
<dbReference type="InParanoid" id="B0S5N4"/>
<dbReference type="OrthoDB" id="125363at2759"/>
<dbReference type="PhylomeDB" id="B0S5N4"/>
<dbReference type="TreeFam" id="TF312962"/>
<dbReference type="Reactome" id="R-DRE-399954">
    <property type="pathway name" value="Sema3A PAK dependent Axon repulsion"/>
</dbReference>
<dbReference type="Reactome" id="R-DRE-399956">
    <property type="pathway name" value="CRMPs in Sema3A signaling"/>
</dbReference>
<dbReference type="PRO" id="PR:B0S5N4"/>
<dbReference type="Proteomes" id="UP000000437">
    <property type="component" value="Chromosome 8"/>
</dbReference>
<dbReference type="GO" id="GO:0016020">
    <property type="term" value="C:membrane"/>
    <property type="evidence" value="ECO:0000314"/>
    <property type="project" value="ZFIN"/>
</dbReference>
<dbReference type="GO" id="GO:0005886">
    <property type="term" value="C:plasma membrane"/>
    <property type="evidence" value="ECO:0000318"/>
    <property type="project" value="GO_Central"/>
</dbReference>
<dbReference type="GO" id="GO:0002116">
    <property type="term" value="C:semaphorin receptor complex"/>
    <property type="evidence" value="ECO:0000318"/>
    <property type="project" value="GO_Central"/>
</dbReference>
<dbReference type="GO" id="GO:0042802">
    <property type="term" value="F:identical protein binding"/>
    <property type="evidence" value="ECO:0000353"/>
    <property type="project" value="ZFIN"/>
</dbReference>
<dbReference type="GO" id="GO:0017154">
    <property type="term" value="F:semaphorin receptor activity"/>
    <property type="evidence" value="ECO:0000318"/>
    <property type="project" value="GO_Central"/>
</dbReference>
<dbReference type="GO" id="GO:0048675">
    <property type="term" value="P:axon extension"/>
    <property type="evidence" value="ECO:0000315"/>
    <property type="project" value="ZFIN"/>
</dbReference>
<dbReference type="GO" id="GO:0048755">
    <property type="term" value="P:branching morphogenesis of a nerve"/>
    <property type="evidence" value="ECO:0000315"/>
    <property type="project" value="ZFIN"/>
</dbReference>
<dbReference type="GO" id="GO:0003205">
    <property type="term" value="P:cardiac chamber development"/>
    <property type="evidence" value="ECO:0000315"/>
    <property type="project" value="ZFIN"/>
</dbReference>
<dbReference type="GO" id="GO:0060272">
    <property type="term" value="P:embryonic skeletal joint morphogenesis"/>
    <property type="evidence" value="ECO:0000315"/>
    <property type="project" value="ZFIN"/>
</dbReference>
<dbReference type="GO" id="GO:0008045">
    <property type="term" value="P:motor neuron axon guidance"/>
    <property type="evidence" value="ECO:0000315"/>
    <property type="project" value="ZFIN"/>
</dbReference>
<dbReference type="GO" id="GO:0030334">
    <property type="term" value="P:regulation of cell migration"/>
    <property type="evidence" value="ECO:0000318"/>
    <property type="project" value="GO_Central"/>
</dbReference>
<dbReference type="GO" id="GO:0048696">
    <property type="term" value="P:regulation of collateral sprouting in absence of injury"/>
    <property type="evidence" value="ECO:0000315"/>
    <property type="project" value="ZFIN"/>
</dbReference>
<dbReference type="GO" id="GO:0071526">
    <property type="term" value="P:semaphorin-plexin signaling pathway"/>
    <property type="evidence" value="ECO:0000318"/>
    <property type="project" value="GO_Central"/>
</dbReference>
<dbReference type="GO" id="GO:0007416">
    <property type="term" value="P:synapse assembly"/>
    <property type="evidence" value="ECO:0000318"/>
    <property type="project" value="GO_Central"/>
</dbReference>
<dbReference type="CDD" id="cd00603">
    <property type="entry name" value="IPT_PCSR"/>
    <property type="match status" value="1"/>
</dbReference>
<dbReference type="CDD" id="cd01180">
    <property type="entry name" value="IPT_plexin_repeat1"/>
    <property type="match status" value="1"/>
</dbReference>
<dbReference type="CDD" id="cd01181">
    <property type="entry name" value="IPT_plexin_repeat3"/>
    <property type="match status" value="1"/>
</dbReference>
<dbReference type="CDD" id="cd12790">
    <property type="entry name" value="RasGAP_plexin_A"/>
    <property type="match status" value="1"/>
</dbReference>
<dbReference type="CDD" id="cd11273">
    <property type="entry name" value="Sema_plexin_A3"/>
    <property type="match status" value="1"/>
</dbReference>
<dbReference type="FunFam" id="1.10.506.10:FF:000005">
    <property type="entry name" value="Plexin A1"/>
    <property type="match status" value="1"/>
</dbReference>
<dbReference type="FunFam" id="1.10.506.10:FF:000006">
    <property type="entry name" value="Plexin A1"/>
    <property type="match status" value="1"/>
</dbReference>
<dbReference type="FunFam" id="2.60.40.10:FF:000123">
    <property type="entry name" value="Plexin A1"/>
    <property type="match status" value="1"/>
</dbReference>
<dbReference type="FunFam" id="2.60.40.10:FF:000320">
    <property type="entry name" value="Plexin A1"/>
    <property type="match status" value="1"/>
</dbReference>
<dbReference type="FunFam" id="2.130.10.10:FF:000006">
    <property type="entry name" value="Plexin A2"/>
    <property type="match status" value="1"/>
</dbReference>
<dbReference type="FunFam" id="2.60.40.10:FF:000071">
    <property type="entry name" value="Plexin A2"/>
    <property type="match status" value="1"/>
</dbReference>
<dbReference type="FunFam" id="3.10.20.90:FF:000157">
    <property type="entry name" value="Plexin A3"/>
    <property type="match status" value="1"/>
</dbReference>
<dbReference type="FunFam" id="2.60.40.10:FF:000329">
    <property type="entry name" value="Plexin A4"/>
    <property type="match status" value="1"/>
</dbReference>
<dbReference type="Gene3D" id="1.10.506.10">
    <property type="entry name" value="GTPase Activation - p120gap, domain 1"/>
    <property type="match status" value="2"/>
</dbReference>
<dbReference type="Gene3D" id="2.60.40.10">
    <property type="entry name" value="Immunoglobulins"/>
    <property type="match status" value="5"/>
</dbReference>
<dbReference type="Gene3D" id="3.10.20.90">
    <property type="entry name" value="Phosphatidylinositol 3-kinase Catalytic Subunit, Chain A, domain 1"/>
    <property type="match status" value="1"/>
</dbReference>
<dbReference type="Gene3D" id="2.130.10.10">
    <property type="entry name" value="YVTN repeat-like/Quinoprotein amine dehydrogenase"/>
    <property type="match status" value="1"/>
</dbReference>
<dbReference type="InterPro" id="IPR013783">
    <property type="entry name" value="Ig-like_fold"/>
</dbReference>
<dbReference type="InterPro" id="IPR014756">
    <property type="entry name" value="Ig_E-set"/>
</dbReference>
<dbReference type="InterPro" id="IPR002909">
    <property type="entry name" value="IPT_dom"/>
</dbReference>
<dbReference type="InterPro" id="IPR031148">
    <property type="entry name" value="Plexin"/>
</dbReference>
<dbReference type="InterPro" id="IPR013548">
    <property type="entry name" value="Plexin_cytoplasmic_RasGAP_dom"/>
</dbReference>
<dbReference type="InterPro" id="IPR046800">
    <property type="entry name" value="Plexin_RBD"/>
</dbReference>
<dbReference type="InterPro" id="IPR002165">
    <property type="entry name" value="Plexin_repeat"/>
</dbReference>
<dbReference type="InterPro" id="IPR016201">
    <property type="entry name" value="PSI"/>
</dbReference>
<dbReference type="InterPro" id="IPR008936">
    <property type="entry name" value="Rho_GTPase_activation_prot"/>
</dbReference>
<dbReference type="InterPro" id="IPR001627">
    <property type="entry name" value="Semap_dom"/>
</dbReference>
<dbReference type="InterPro" id="IPR036352">
    <property type="entry name" value="Semap_dom_sf"/>
</dbReference>
<dbReference type="InterPro" id="IPR041019">
    <property type="entry name" value="TIG1_plexin"/>
</dbReference>
<dbReference type="InterPro" id="IPR041362">
    <property type="entry name" value="TIG2_plexin"/>
</dbReference>
<dbReference type="InterPro" id="IPR015943">
    <property type="entry name" value="WD40/YVTN_repeat-like_dom_sf"/>
</dbReference>
<dbReference type="PANTHER" id="PTHR22625">
    <property type="entry name" value="PLEXIN"/>
    <property type="match status" value="1"/>
</dbReference>
<dbReference type="PANTHER" id="PTHR22625:SF32">
    <property type="entry name" value="PLEXIN-A3"/>
    <property type="match status" value="1"/>
</dbReference>
<dbReference type="Pfam" id="PF08337">
    <property type="entry name" value="Plexin_cytopl"/>
    <property type="match status" value="1"/>
</dbReference>
<dbReference type="Pfam" id="PF20170">
    <property type="entry name" value="Plexin_RBD"/>
    <property type="match status" value="1"/>
</dbReference>
<dbReference type="Pfam" id="PF01437">
    <property type="entry name" value="PSI"/>
    <property type="match status" value="2"/>
</dbReference>
<dbReference type="Pfam" id="PF24479">
    <property type="entry name" value="PSI_PlexinA-B"/>
    <property type="match status" value="1"/>
</dbReference>
<dbReference type="Pfam" id="PF01403">
    <property type="entry name" value="Sema"/>
    <property type="match status" value="1"/>
</dbReference>
<dbReference type="Pfam" id="PF01833">
    <property type="entry name" value="TIG"/>
    <property type="match status" value="4"/>
</dbReference>
<dbReference type="Pfam" id="PF18020">
    <property type="entry name" value="TIG_2"/>
    <property type="match status" value="1"/>
</dbReference>
<dbReference type="Pfam" id="PF17960">
    <property type="entry name" value="TIG_plexin"/>
    <property type="match status" value="1"/>
</dbReference>
<dbReference type="SMART" id="SM00429">
    <property type="entry name" value="IPT"/>
    <property type="match status" value="4"/>
</dbReference>
<dbReference type="SMART" id="SM00423">
    <property type="entry name" value="PSI"/>
    <property type="match status" value="3"/>
</dbReference>
<dbReference type="SMART" id="SM00630">
    <property type="entry name" value="Sema"/>
    <property type="match status" value="1"/>
</dbReference>
<dbReference type="SUPFAM" id="SSF81296">
    <property type="entry name" value="E set domains"/>
    <property type="match status" value="4"/>
</dbReference>
<dbReference type="SUPFAM" id="SSF48350">
    <property type="entry name" value="GTPase activation domain, GAP"/>
    <property type="match status" value="1"/>
</dbReference>
<dbReference type="SUPFAM" id="SSF103575">
    <property type="entry name" value="Plexin repeat"/>
    <property type="match status" value="2"/>
</dbReference>
<dbReference type="SUPFAM" id="SSF101912">
    <property type="entry name" value="Sema domain"/>
    <property type="match status" value="1"/>
</dbReference>
<dbReference type="PROSITE" id="PS51004">
    <property type="entry name" value="SEMA"/>
    <property type="match status" value="1"/>
</dbReference>
<reference key="1">
    <citation type="journal article" date="2007" name="J. Neurosci.">
        <title>PlexinA3 restricts spinal exit points and branching of trunk motor nerves in embryonic zebrafish.</title>
        <authorList>
            <person name="Feldner J."/>
            <person name="Reimer M.M."/>
            <person name="Schweitzer J."/>
            <person name="Wendik B."/>
            <person name="Meyer D."/>
            <person name="Becker T."/>
            <person name="Becker C.G."/>
        </authorList>
    </citation>
    <scope>NUCLEOTIDE SEQUENCE [MRNA]</scope>
    <scope>FUNCTION</scope>
    <scope>TISSUE SPECIFICITY</scope>
</reference>
<reference key="2">
    <citation type="journal article" date="2007" name="Biochem. Biophys. Res. Commun.">
        <title>Identification and characterization of zebrafish semaphorin 6D.</title>
        <authorList>
            <person name="Kimura M."/>
            <person name="Taniguchi M."/>
            <person name="Mikami Y."/>
            <person name="Masuda T."/>
            <person name="Yoshida T."/>
            <person name="Mishina M."/>
            <person name="Shimizu T."/>
        </authorList>
    </citation>
    <scope>NUCLEOTIDE SEQUENCE [MRNA]</scope>
    <source>
        <strain>AB</strain>
        <tissue>Brain</tissue>
    </source>
</reference>
<reference key="3">
    <citation type="journal article" date="2013" name="Nature">
        <title>The zebrafish reference genome sequence and its relationship to the human genome.</title>
        <authorList>
            <person name="Howe K."/>
            <person name="Clark M.D."/>
            <person name="Torroja C.F."/>
            <person name="Torrance J."/>
            <person name="Berthelot C."/>
            <person name="Muffato M."/>
            <person name="Collins J.E."/>
            <person name="Humphray S."/>
            <person name="McLaren K."/>
            <person name="Matthews L."/>
            <person name="McLaren S."/>
            <person name="Sealy I."/>
            <person name="Caccamo M."/>
            <person name="Churcher C."/>
            <person name="Scott C."/>
            <person name="Barrett J.C."/>
            <person name="Koch R."/>
            <person name="Rauch G.J."/>
            <person name="White S."/>
            <person name="Chow W."/>
            <person name="Kilian B."/>
            <person name="Quintais L.T."/>
            <person name="Guerra-Assuncao J.A."/>
            <person name="Zhou Y."/>
            <person name="Gu Y."/>
            <person name="Yen J."/>
            <person name="Vogel J.H."/>
            <person name="Eyre T."/>
            <person name="Redmond S."/>
            <person name="Banerjee R."/>
            <person name="Chi J."/>
            <person name="Fu B."/>
            <person name="Langley E."/>
            <person name="Maguire S.F."/>
            <person name="Laird G.K."/>
            <person name="Lloyd D."/>
            <person name="Kenyon E."/>
            <person name="Donaldson S."/>
            <person name="Sehra H."/>
            <person name="Almeida-King J."/>
            <person name="Loveland J."/>
            <person name="Trevanion S."/>
            <person name="Jones M."/>
            <person name="Quail M."/>
            <person name="Willey D."/>
            <person name="Hunt A."/>
            <person name="Burton J."/>
            <person name="Sims S."/>
            <person name="McLay K."/>
            <person name="Plumb B."/>
            <person name="Davis J."/>
            <person name="Clee C."/>
            <person name="Oliver K."/>
            <person name="Clark R."/>
            <person name="Riddle C."/>
            <person name="Elliot D."/>
            <person name="Threadgold G."/>
            <person name="Harden G."/>
            <person name="Ware D."/>
            <person name="Begum S."/>
            <person name="Mortimore B."/>
            <person name="Kerry G."/>
            <person name="Heath P."/>
            <person name="Phillimore B."/>
            <person name="Tracey A."/>
            <person name="Corby N."/>
            <person name="Dunn M."/>
            <person name="Johnson C."/>
            <person name="Wood J."/>
            <person name="Clark S."/>
            <person name="Pelan S."/>
            <person name="Griffiths G."/>
            <person name="Smith M."/>
            <person name="Glithero R."/>
            <person name="Howden P."/>
            <person name="Barker N."/>
            <person name="Lloyd C."/>
            <person name="Stevens C."/>
            <person name="Harley J."/>
            <person name="Holt K."/>
            <person name="Panagiotidis G."/>
            <person name="Lovell J."/>
            <person name="Beasley H."/>
            <person name="Henderson C."/>
            <person name="Gordon D."/>
            <person name="Auger K."/>
            <person name="Wright D."/>
            <person name="Collins J."/>
            <person name="Raisen C."/>
            <person name="Dyer L."/>
            <person name="Leung K."/>
            <person name="Robertson L."/>
            <person name="Ambridge K."/>
            <person name="Leongamornlert D."/>
            <person name="McGuire S."/>
            <person name="Gilderthorp R."/>
            <person name="Griffiths C."/>
            <person name="Manthravadi D."/>
            <person name="Nichol S."/>
            <person name="Barker G."/>
            <person name="Whitehead S."/>
            <person name="Kay M."/>
            <person name="Brown J."/>
            <person name="Murnane C."/>
            <person name="Gray E."/>
            <person name="Humphries M."/>
            <person name="Sycamore N."/>
            <person name="Barker D."/>
            <person name="Saunders D."/>
            <person name="Wallis J."/>
            <person name="Babbage A."/>
            <person name="Hammond S."/>
            <person name="Mashreghi-Mohammadi M."/>
            <person name="Barr L."/>
            <person name="Martin S."/>
            <person name="Wray P."/>
            <person name="Ellington A."/>
            <person name="Matthews N."/>
            <person name="Ellwood M."/>
            <person name="Woodmansey R."/>
            <person name="Clark G."/>
            <person name="Cooper J."/>
            <person name="Tromans A."/>
            <person name="Grafham D."/>
            <person name="Skuce C."/>
            <person name="Pandian R."/>
            <person name="Andrews R."/>
            <person name="Harrison E."/>
            <person name="Kimberley A."/>
            <person name="Garnett J."/>
            <person name="Fosker N."/>
            <person name="Hall R."/>
            <person name="Garner P."/>
            <person name="Kelly D."/>
            <person name="Bird C."/>
            <person name="Palmer S."/>
            <person name="Gehring I."/>
            <person name="Berger A."/>
            <person name="Dooley C.M."/>
            <person name="Ersan-Urun Z."/>
            <person name="Eser C."/>
            <person name="Geiger H."/>
            <person name="Geisler M."/>
            <person name="Karotki L."/>
            <person name="Kirn A."/>
            <person name="Konantz J."/>
            <person name="Konantz M."/>
            <person name="Oberlander M."/>
            <person name="Rudolph-Geiger S."/>
            <person name="Teucke M."/>
            <person name="Lanz C."/>
            <person name="Raddatz G."/>
            <person name="Osoegawa K."/>
            <person name="Zhu B."/>
            <person name="Rapp A."/>
            <person name="Widaa S."/>
            <person name="Langford C."/>
            <person name="Yang F."/>
            <person name="Schuster S.C."/>
            <person name="Carter N.P."/>
            <person name="Harrow J."/>
            <person name="Ning Z."/>
            <person name="Herrero J."/>
            <person name="Searle S.M."/>
            <person name="Enright A."/>
            <person name="Geisler R."/>
            <person name="Plasterk R.H."/>
            <person name="Lee C."/>
            <person name="Westerfield M."/>
            <person name="de Jong P.J."/>
            <person name="Zon L.I."/>
            <person name="Postlethwait J.H."/>
            <person name="Nusslein-Volhard C."/>
            <person name="Hubbard T.J."/>
            <person name="Roest Crollius H."/>
            <person name="Rogers J."/>
            <person name="Stemple D.L."/>
        </authorList>
    </citation>
    <scope>NUCLEOTIDE SEQUENCE [LARGE SCALE GENOMIC DNA]</scope>
    <source>
        <strain>Tuebingen</strain>
    </source>
</reference>
<reference key="4">
    <citation type="submission" date="2008-04" db="EMBL/GenBank/DDBJ databases">
        <authorList>
            <consortium name="NIH - Zebrafish Gene Collection (ZGC) project"/>
        </authorList>
    </citation>
    <scope>NUCLEOTIDE SEQUENCE [LARGE SCALE MRNA]</scope>
</reference>
<reference key="5">
    <citation type="journal article" date="2007" name="Development">
        <title>Analysis of zebrafish sidetracked mutants reveals a novel role for Plexin A3 in intraspinal motor axon guidance.</title>
        <authorList>
            <person name="Palaisa K.A."/>
            <person name="Granato M."/>
        </authorList>
    </citation>
    <scope>FUNCTION</scope>
</reference>